<name>PCYA_SYNE7</name>
<organism>
    <name type="scientific">Synechococcus elongatus (strain ATCC 33912 / PCC 7942 / FACHB-805)</name>
    <name type="common">Anacystis nidulans R2</name>
    <dbReference type="NCBI Taxonomy" id="1140"/>
    <lineage>
        <taxon>Bacteria</taxon>
        <taxon>Bacillati</taxon>
        <taxon>Cyanobacteriota</taxon>
        <taxon>Cyanophyceae</taxon>
        <taxon>Synechococcales</taxon>
        <taxon>Synechococcaceae</taxon>
        <taxon>Synechococcus</taxon>
    </lineage>
</organism>
<comment type="function">
    <text evidence="1">Catalyzes the four-electron reduction of biliverdin IX-alpha (2-electron reduction at both the A and D rings); the reaction proceeds via an isolatable 2-electron intermediate, 181,182-dihydrobiliverdin.</text>
</comment>
<comment type="catalytic activity">
    <reaction>
        <text>(2R,3Z)-phycocyanobilin + 4 oxidized [2Fe-2S]-[ferredoxin] = biliverdin IXalpha + 4 reduced [2Fe-2S]-[ferredoxin] + 4 H(+)</text>
        <dbReference type="Rhea" id="RHEA:15309"/>
        <dbReference type="Rhea" id="RHEA-COMP:10000"/>
        <dbReference type="Rhea" id="RHEA-COMP:10001"/>
        <dbReference type="ChEBI" id="CHEBI:15378"/>
        <dbReference type="ChEBI" id="CHEBI:33737"/>
        <dbReference type="ChEBI" id="CHEBI:33738"/>
        <dbReference type="ChEBI" id="CHEBI:57437"/>
        <dbReference type="ChEBI" id="CHEBI:57991"/>
        <dbReference type="EC" id="1.3.7.5"/>
    </reaction>
</comment>
<comment type="similarity">
    <text evidence="2">Belongs to the HY2 family.</text>
</comment>
<accession>Q8KPS9</accession>
<accession>Q31NW4</accession>
<protein>
    <recommendedName>
        <fullName>Phycocyanobilin:ferredoxin oxidoreductase</fullName>
        <ecNumber>1.3.7.5</ecNumber>
    </recommendedName>
</protein>
<gene>
    <name type="primary">pcyA</name>
    <name type="ordered locus">Synpcc7942_1225</name>
    <name type="ORF">see0002</name>
</gene>
<keyword id="KW-0560">Oxidoreductase</keyword>
<keyword id="KW-1185">Reference proteome</keyword>
<proteinExistence type="inferred from homology"/>
<reference key="1">
    <citation type="submission" date="2002-06" db="EMBL/GenBank/DDBJ databases">
        <title>Synechococcus elongatus PCC7942 cosmid 7G3.</title>
        <authorList>
            <person name="Holtman C.K."/>
            <person name="Sandoval P."/>
            <person name="Chen Y."/>
            <person name="Socias T."/>
            <person name="Mohler B.J."/>
            <person name="McMurtry S."/>
            <person name="Gonzalez A."/>
            <person name="Salinas I."/>
            <person name="Golden S.S."/>
            <person name="Youderian P."/>
        </authorList>
    </citation>
    <scope>NUCLEOTIDE SEQUENCE [GENOMIC DNA]</scope>
</reference>
<reference key="2">
    <citation type="submission" date="2005-08" db="EMBL/GenBank/DDBJ databases">
        <title>Complete sequence of chromosome 1 of Synechococcus elongatus PCC 7942.</title>
        <authorList>
            <consortium name="US DOE Joint Genome Institute"/>
            <person name="Copeland A."/>
            <person name="Lucas S."/>
            <person name="Lapidus A."/>
            <person name="Barry K."/>
            <person name="Detter J.C."/>
            <person name="Glavina T."/>
            <person name="Hammon N."/>
            <person name="Israni S."/>
            <person name="Pitluck S."/>
            <person name="Schmutz J."/>
            <person name="Larimer F."/>
            <person name="Land M."/>
            <person name="Kyrpides N."/>
            <person name="Lykidis A."/>
            <person name="Golden S."/>
            <person name="Richardson P."/>
        </authorList>
    </citation>
    <scope>NUCLEOTIDE SEQUENCE [LARGE SCALE GENOMIC DNA]</scope>
    <source>
        <strain>ATCC 33912 / PCC 7942 / FACHB-805</strain>
    </source>
</reference>
<evidence type="ECO:0000250" key="1"/>
<evidence type="ECO:0000305" key="2"/>
<sequence length="248" mass="27987">MSSSTQVGLKEQLHPLIRDLATGIEATWQRWLNLEPYAAMPADLGYIEGKLEGERLQIENRCYQSREFRKLHLELARVGNNLDILHCVLFPRTTFDLPMFGADLVGGRGQISAAIVDLSPTTIARELSNDYIAGLTALPNPTFQGLRELPTWGDIFSSFCLFIRPGSPEEEAAFLDRALGFLQVHCQQAAAATALTDPEAIATVLEQQRYYCEQQRRNDKTRRVLEKAFGDDWADRYMTTMLFDLPSD</sequence>
<dbReference type="EC" id="1.3.7.5"/>
<dbReference type="EMBL" id="AY120853">
    <property type="protein sequence ID" value="AAM82675.1"/>
    <property type="molecule type" value="Genomic_DNA"/>
</dbReference>
<dbReference type="EMBL" id="CP000100">
    <property type="protein sequence ID" value="ABB57255.1"/>
    <property type="molecule type" value="Genomic_DNA"/>
</dbReference>
<dbReference type="RefSeq" id="WP_011377925.1">
    <property type="nucleotide sequence ID" value="NZ_JACJTX010000003.1"/>
</dbReference>
<dbReference type="SMR" id="Q8KPS9"/>
<dbReference type="STRING" id="1140.Synpcc7942_1225"/>
<dbReference type="PaxDb" id="1140-Synpcc7942_1225"/>
<dbReference type="KEGG" id="syf:Synpcc7942_1225"/>
<dbReference type="eggNOG" id="ENOG502Z7RN">
    <property type="taxonomic scope" value="Bacteria"/>
</dbReference>
<dbReference type="HOGENOM" id="CLU_074224_0_0_3"/>
<dbReference type="OrthoDB" id="581340at2"/>
<dbReference type="BioCyc" id="SYNEL:SYNPCC7942_1225-MONOMER"/>
<dbReference type="Proteomes" id="UP000889800">
    <property type="component" value="Chromosome"/>
</dbReference>
<dbReference type="GO" id="GO:0050897">
    <property type="term" value="F:cobalt ion binding"/>
    <property type="evidence" value="ECO:0007669"/>
    <property type="project" value="InterPro"/>
</dbReference>
<dbReference type="GO" id="GO:0050620">
    <property type="term" value="F:phycocyanobilin:ferredoxin oxidoreductase activity"/>
    <property type="evidence" value="ECO:0007669"/>
    <property type="project" value="UniProtKB-UniRule"/>
</dbReference>
<dbReference type="GO" id="GO:0010024">
    <property type="term" value="P:phytochromobilin biosynthetic process"/>
    <property type="evidence" value="ECO:0007669"/>
    <property type="project" value="InterPro"/>
</dbReference>
<dbReference type="Gene3D" id="3.40.1500.20">
    <property type="match status" value="1"/>
</dbReference>
<dbReference type="HAMAP" id="MF_00618">
    <property type="entry name" value="Ferredoxin_bilin_red"/>
    <property type="match status" value="1"/>
</dbReference>
<dbReference type="InterPro" id="IPR009249">
    <property type="entry name" value="Ferredoxin-dep_bilin_Rdtase"/>
</dbReference>
<dbReference type="InterPro" id="IPR022870">
    <property type="entry name" value="Ferredoxin_bilin_OxRdtase"/>
</dbReference>
<dbReference type="NCBIfam" id="NF002760">
    <property type="entry name" value="PRK02816.1"/>
    <property type="match status" value="1"/>
</dbReference>
<dbReference type="PANTHER" id="PTHR34557">
    <property type="entry name" value="PHYTOCHROMOBILIN:FERREDOXIN OXIDOREDUCTASE, CHLOROPLASTIC"/>
    <property type="match status" value="1"/>
</dbReference>
<dbReference type="PANTHER" id="PTHR34557:SF1">
    <property type="entry name" value="PHYTOCHROMOBILIN:FERREDOXIN OXIDOREDUCTASE, CHLOROPLASTIC"/>
    <property type="match status" value="1"/>
</dbReference>
<dbReference type="Pfam" id="PF05996">
    <property type="entry name" value="Fe_bilin_red"/>
    <property type="match status" value="1"/>
</dbReference>
<feature type="chain" id="PRO_0000216745" description="Phycocyanobilin:ferredoxin oxidoreductase">
    <location>
        <begin position="1"/>
        <end position="248"/>
    </location>
</feature>